<feature type="chain" id="PRO_0000448579" description="Protein ZW2">
    <location>
        <begin position="1"/>
        <end position="225"/>
    </location>
</feature>
<feature type="domain" description="DOG1" evidence="2">
    <location>
        <begin position="7"/>
        <end position="225"/>
    </location>
</feature>
<feature type="sequence conflict" description="In Ref. 5; BAH30346." evidence="4" ref="5">
    <original>E</original>
    <variation>K</variation>
    <location>
        <position position="34"/>
    </location>
</feature>
<protein>
    <recommendedName>
        <fullName evidence="3">Protein ZW2</fullName>
    </recommendedName>
</protein>
<accession>Q9SLV1</accession>
<accession>C0SV05</accession>
<evidence type="ECO:0000250" key="1">
    <source>
        <dbReference type="UniProtKB" id="O04515"/>
    </source>
</evidence>
<evidence type="ECO:0000255" key="2">
    <source>
        <dbReference type="PROSITE-ProRule" id="PRU01147"/>
    </source>
</evidence>
<evidence type="ECO:0000303" key="3">
    <source>
    </source>
</evidence>
<evidence type="ECO:0000305" key="4"/>
<evidence type="ECO:0000312" key="5">
    <source>
        <dbReference type="Araport" id="AT1G58330"/>
    </source>
</evidence>
<evidence type="ECO:0000312" key="6">
    <source>
        <dbReference type="EMBL" id="AAF82255.1"/>
    </source>
</evidence>
<name>ZW2_ARATH</name>
<dbReference type="EMBL" id="AC008051">
    <property type="protein sequence ID" value="AAF82255.1"/>
    <property type="molecule type" value="Genomic_DNA"/>
</dbReference>
<dbReference type="EMBL" id="CP002684">
    <property type="protein sequence ID" value="AEE33536.1"/>
    <property type="molecule type" value="Genomic_DNA"/>
</dbReference>
<dbReference type="EMBL" id="AB028196">
    <property type="protein sequence ID" value="BAA87938.1"/>
    <property type="molecule type" value="mRNA"/>
</dbReference>
<dbReference type="EMBL" id="BT025293">
    <property type="protein sequence ID" value="ABF19046.1"/>
    <property type="molecule type" value="mRNA"/>
</dbReference>
<dbReference type="EMBL" id="AB493508">
    <property type="protein sequence ID" value="BAH30346.1"/>
    <property type="molecule type" value="Genomic_DNA"/>
</dbReference>
<dbReference type="PIR" id="T52443">
    <property type="entry name" value="T52443"/>
</dbReference>
<dbReference type="RefSeq" id="NP_564730.1">
    <property type="nucleotide sequence ID" value="NM_104613.4"/>
</dbReference>
<dbReference type="SMR" id="Q9SLV1"/>
<dbReference type="IntAct" id="Q9SLV1">
    <property type="interactions" value="1"/>
</dbReference>
<dbReference type="STRING" id="3702.Q9SLV1"/>
<dbReference type="PaxDb" id="3702-AT1G58330.1"/>
<dbReference type="DNASU" id="842202"/>
<dbReference type="EnsemblPlants" id="AT1G58330.1">
    <property type="protein sequence ID" value="AT1G58330.1"/>
    <property type="gene ID" value="AT1G58330"/>
</dbReference>
<dbReference type="GeneID" id="842202"/>
<dbReference type="Gramene" id="AT1G58330.1">
    <property type="protein sequence ID" value="AT1G58330.1"/>
    <property type="gene ID" value="AT1G58330"/>
</dbReference>
<dbReference type="KEGG" id="ath:AT1G58330"/>
<dbReference type="Araport" id="AT1G58330"/>
<dbReference type="TAIR" id="AT1G58330">
    <property type="gene designation" value="ZW2"/>
</dbReference>
<dbReference type="eggNOG" id="ENOG502RZPJ">
    <property type="taxonomic scope" value="Eukaryota"/>
</dbReference>
<dbReference type="HOGENOM" id="CLU_024782_2_0_1"/>
<dbReference type="InParanoid" id="Q9SLV1"/>
<dbReference type="OMA" id="MSHINVF"/>
<dbReference type="PhylomeDB" id="Q9SLV1"/>
<dbReference type="PRO" id="PR:Q9SLV1"/>
<dbReference type="Proteomes" id="UP000006548">
    <property type="component" value="Chromosome 1"/>
</dbReference>
<dbReference type="ExpressionAtlas" id="Q9SLV1">
    <property type="expression patterns" value="baseline and differential"/>
</dbReference>
<dbReference type="GO" id="GO:0043565">
    <property type="term" value="F:sequence-specific DNA binding"/>
    <property type="evidence" value="ECO:0007669"/>
    <property type="project" value="InterPro"/>
</dbReference>
<dbReference type="GO" id="GO:0009738">
    <property type="term" value="P:abscisic acid-activated signaling pathway"/>
    <property type="evidence" value="ECO:0007669"/>
    <property type="project" value="UniProtKB-KW"/>
</dbReference>
<dbReference type="GO" id="GO:0006351">
    <property type="term" value="P:DNA-templated transcription"/>
    <property type="evidence" value="ECO:0007669"/>
    <property type="project" value="InterPro"/>
</dbReference>
<dbReference type="InterPro" id="IPR051886">
    <property type="entry name" value="Seed_Dev/Stress_Resp_Reg"/>
</dbReference>
<dbReference type="InterPro" id="IPR025422">
    <property type="entry name" value="TGA_domain"/>
</dbReference>
<dbReference type="PANTHER" id="PTHR46354">
    <property type="entry name" value="DOG1 DOMAIN-CONTAINING PROTEIN"/>
    <property type="match status" value="1"/>
</dbReference>
<dbReference type="PANTHER" id="PTHR46354:SF1">
    <property type="entry name" value="PROTEIN RESPONSE TO ABA AND SALT 1-RELATED"/>
    <property type="match status" value="1"/>
</dbReference>
<dbReference type="Pfam" id="PF14144">
    <property type="entry name" value="DOG1"/>
    <property type="match status" value="1"/>
</dbReference>
<dbReference type="PROSITE" id="PS51806">
    <property type="entry name" value="DOG1"/>
    <property type="match status" value="1"/>
</dbReference>
<proteinExistence type="evidence at transcript level"/>
<sequence>MPITSSSETFASFFNDWLCRHRQFVQQLAHLADETTIVTPIEEESLVSNFLSHYLQYYEEKSVAMSVAGDDIYDFFSPPWLSSYEKLILWIGGFKPGMVFKLITTSVNDLTSHQIDQLESIRLETKRRERDLMRRFALLQQSVGDPLLMVPFRRIGVLRLGEGEQPEMEDAMEVLKVEMIKAMKNADQLRCVTVGKVVEVLNPRQSIKLLRAAGEFYLRLRDLGV</sequence>
<organism>
    <name type="scientific">Arabidopsis thaliana</name>
    <name type="common">Mouse-ear cress</name>
    <dbReference type="NCBI Taxonomy" id="3702"/>
    <lineage>
        <taxon>Eukaryota</taxon>
        <taxon>Viridiplantae</taxon>
        <taxon>Streptophyta</taxon>
        <taxon>Embryophyta</taxon>
        <taxon>Tracheophyta</taxon>
        <taxon>Spermatophyta</taxon>
        <taxon>Magnoliopsida</taxon>
        <taxon>eudicotyledons</taxon>
        <taxon>Gunneridae</taxon>
        <taxon>Pentapetalae</taxon>
        <taxon>rosids</taxon>
        <taxon>malvids</taxon>
        <taxon>Brassicales</taxon>
        <taxon>Brassicaceae</taxon>
        <taxon>Camelineae</taxon>
        <taxon>Arabidopsis</taxon>
    </lineage>
</organism>
<gene>
    <name evidence="3" type="primary">ZW2</name>
    <name evidence="5" type="ordered locus">At1g58330</name>
    <name evidence="6" type="ORF">F19C14.6</name>
</gene>
<reference key="1">
    <citation type="journal article" date="2000" name="Nature">
        <title>Sequence and analysis of chromosome 1 of the plant Arabidopsis thaliana.</title>
        <authorList>
            <person name="Theologis A."/>
            <person name="Ecker J.R."/>
            <person name="Palm C.J."/>
            <person name="Federspiel N.A."/>
            <person name="Kaul S."/>
            <person name="White O."/>
            <person name="Alonso J."/>
            <person name="Altafi H."/>
            <person name="Araujo R."/>
            <person name="Bowman C.L."/>
            <person name="Brooks S.Y."/>
            <person name="Buehler E."/>
            <person name="Chan A."/>
            <person name="Chao Q."/>
            <person name="Chen H."/>
            <person name="Cheuk R.F."/>
            <person name="Chin C.W."/>
            <person name="Chung M.K."/>
            <person name="Conn L."/>
            <person name="Conway A.B."/>
            <person name="Conway A.R."/>
            <person name="Creasy T.H."/>
            <person name="Dewar K."/>
            <person name="Dunn P."/>
            <person name="Etgu P."/>
            <person name="Feldblyum T.V."/>
            <person name="Feng J.-D."/>
            <person name="Fong B."/>
            <person name="Fujii C.Y."/>
            <person name="Gill J.E."/>
            <person name="Goldsmith A.D."/>
            <person name="Haas B."/>
            <person name="Hansen N.F."/>
            <person name="Hughes B."/>
            <person name="Huizar L."/>
            <person name="Hunter J.L."/>
            <person name="Jenkins J."/>
            <person name="Johnson-Hopson C."/>
            <person name="Khan S."/>
            <person name="Khaykin E."/>
            <person name="Kim C.J."/>
            <person name="Koo H.L."/>
            <person name="Kremenetskaia I."/>
            <person name="Kurtz D.B."/>
            <person name="Kwan A."/>
            <person name="Lam B."/>
            <person name="Langin-Hooper S."/>
            <person name="Lee A."/>
            <person name="Lee J.M."/>
            <person name="Lenz C.A."/>
            <person name="Li J.H."/>
            <person name="Li Y.-P."/>
            <person name="Lin X."/>
            <person name="Liu S.X."/>
            <person name="Liu Z.A."/>
            <person name="Luros J.S."/>
            <person name="Maiti R."/>
            <person name="Marziali A."/>
            <person name="Militscher J."/>
            <person name="Miranda M."/>
            <person name="Nguyen M."/>
            <person name="Nierman W.C."/>
            <person name="Osborne B.I."/>
            <person name="Pai G."/>
            <person name="Peterson J."/>
            <person name="Pham P.K."/>
            <person name="Rizzo M."/>
            <person name="Rooney T."/>
            <person name="Rowley D."/>
            <person name="Sakano H."/>
            <person name="Salzberg S.L."/>
            <person name="Schwartz J.R."/>
            <person name="Shinn P."/>
            <person name="Southwick A.M."/>
            <person name="Sun H."/>
            <person name="Tallon L.J."/>
            <person name="Tambunga G."/>
            <person name="Toriumi M.J."/>
            <person name="Town C.D."/>
            <person name="Utterback T."/>
            <person name="Van Aken S."/>
            <person name="Vaysberg M."/>
            <person name="Vysotskaia V.S."/>
            <person name="Walker M."/>
            <person name="Wu D."/>
            <person name="Yu G."/>
            <person name="Fraser C.M."/>
            <person name="Venter J.C."/>
            <person name="Davis R.W."/>
        </authorList>
    </citation>
    <scope>NUCLEOTIDE SEQUENCE [LARGE SCALE GENOMIC DNA]</scope>
    <source>
        <strain>cv. Columbia</strain>
    </source>
</reference>
<reference key="2">
    <citation type="journal article" date="2017" name="Plant J.">
        <title>Araport11: a complete reannotation of the Arabidopsis thaliana reference genome.</title>
        <authorList>
            <person name="Cheng C.Y."/>
            <person name="Krishnakumar V."/>
            <person name="Chan A.P."/>
            <person name="Thibaud-Nissen F."/>
            <person name="Schobel S."/>
            <person name="Town C.D."/>
        </authorList>
    </citation>
    <scope>GENOME REANNOTATION</scope>
    <source>
        <strain>cv. Columbia</strain>
    </source>
</reference>
<reference key="3">
    <citation type="journal article" date="1999" name="Gene">
        <title>Isolation and analysis of cDNA within a 300 kb Arabidopsis thaliana genomic region located around the 100 map unit of chromosome 1.</title>
        <authorList>
            <person name="Kato A."/>
            <person name="Suzuki M."/>
            <person name="Kuwahara A."/>
            <person name="Ooe H."/>
            <person name="Higano-Inaba K."/>
            <person name="Komeda Y."/>
        </authorList>
    </citation>
    <scope>NUCLEOTIDE SEQUENCE [LARGE SCALE MRNA]</scope>
    <source>
        <strain>cv. Columbia</strain>
    </source>
</reference>
<reference key="4">
    <citation type="submission" date="2006-04" db="EMBL/GenBank/DDBJ databases">
        <title>Arabidopsis ORF clones.</title>
        <authorList>
            <person name="Shinn P."/>
            <person name="Chen H."/>
            <person name="Kim C.J."/>
            <person name="Ecker J.R."/>
        </authorList>
    </citation>
    <scope>NUCLEOTIDE SEQUENCE [LARGE SCALE MRNA]</scope>
    <source>
        <strain>cv. Columbia</strain>
    </source>
</reference>
<reference key="5">
    <citation type="submission" date="2009-03" db="EMBL/GenBank/DDBJ databases">
        <title>ORF Cloning and Analysis of Arabidopsis Transcription Factor Genes.</title>
        <authorList>
            <person name="Fujita M."/>
        </authorList>
    </citation>
    <scope>NUCLEOTIDE SEQUENCE [LARGE SCALE GENOMIC DNA]</scope>
</reference>
<comment type="function">
    <text evidence="1">May be involved in the regulation of abscisic acid (ABA) sensitivity.</text>
</comment>
<keyword id="KW-0938">Abscisic acid signaling pathway</keyword>
<keyword id="KW-0010">Activator</keyword>
<keyword id="KW-1185">Reference proteome</keyword>
<keyword id="KW-0804">Transcription</keyword>
<keyword id="KW-0805">Transcription regulation</keyword>